<keyword id="KW-0903">Direct protein sequencing</keyword>
<keyword id="KW-0249">Electron transport</keyword>
<keyword id="KW-0349">Heme</keyword>
<keyword id="KW-0408">Iron</keyword>
<keyword id="KW-0479">Metal-binding</keyword>
<keyword id="KW-0574">Periplasm</keyword>
<keyword id="KW-0602">Photosynthesis</keyword>
<keyword id="KW-0813">Transport</keyword>
<protein>
    <recommendedName>
        <fullName evidence="1">Cytochrome c2</fullName>
    </recommendedName>
</protein>
<organism>
    <name type="scientific">Rhodovulum adriaticum</name>
    <name type="common">Rhodopseudomonas adriatica</name>
    <dbReference type="NCBI Taxonomy" id="35804"/>
    <lineage>
        <taxon>Bacteria</taxon>
        <taxon>Pseudomonadati</taxon>
        <taxon>Pseudomonadota</taxon>
        <taxon>Alphaproteobacteria</taxon>
        <taxon>Rhodobacterales</taxon>
        <taxon>Paracoccaceae</taxon>
        <taxon>Rhodovulum</taxon>
    </lineage>
</organism>
<accession>P86320</accession>
<dbReference type="SMR" id="P86320"/>
<dbReference type="GO" id="GO:0042597">
    <property type="term" value="C:periplasmic space"/>
    <property type="evidence" value="ECO:0000314"/>
    <property type="project" value="UniProtKB"/>
</dbReference>
<dbReference type="GO" id="GO:0009055">
    <property type="term" value="F:electron transfer activity"/>
    <property type="evidence" value="ECO:0007669"/>
    <property type="project" value="InterPro"/>
</dbReference>
<dbReference type="GO" id="GO:0020037">
    <property type="term" value="F:heme binding"/>
    <property type="evidence" value="ECO:0007669"/>
    <property type="project" value="InterPro"/>
</dbReference>
<dbReference type="GO" id="GO:0046872">
    <property type="term" value="F:metal ion binding"/>
    <property type="evidence" value="ECO:0007669"/>
    <property type="project" value="UniProtKB-KW"/>
</dbReference>
<dbReference type="GO" id="GO:0015979">
    <property type="term" value="P:photosynthesis"/>
    <property type="evidence" value="ECO:0007669"/>
    <property type="project" value="UniProtKB-KW"/>
</dbReference>
<dbReference type="FunFam" id="1.10.760.10:FF:000044">
    <property type="entry name" value="Cytochrome c2"/>
    <property type="match status" value="1"/>
</dbReference>
<dbReference type="Gene3D" id="1.10.760.10">
    <property type="entry name" value="Cytochrome c-like domain"/>
    <property type="match status" value="1"/>
</dbReference>
<dbReference type="InterPro" id="IPR009056">
    <property type="entry name" value="Cyt_c-like_dom"/>
</dbReference>
<dbReference type="InterPro" id="IPR036909">
    <property type="entry name" value="Cyt_c-like_dom_sf"/>
</dbReference>
<dbReference type="InterPro" id="IPR002327">
    <property type="entry name" value="Cyt_c_1A/1B"/>
</dbReference>
<dbReference type="PANTHER" id="PTHR11961">
    <property type="entry name" value="CYTOCHROME C"/>
    <property type="match status" value="1"/>
</dbReference>
<dbReference type="Pfam" id="PF00034">
    <property type="entry name" value="Cytochrom_C"/>
    <property type="match status" value="1"/>
</dbReference>
<dbReference type="SUPFAM" id="SSF46626">
    <property type="entry name" value="Cytochrome c"/>
    <property type="match status" value="1"/>
</dbReference>
<dbReference type="PROSITE" id="PS51007">
    <property type="entry name" value="CYTC"/>
    <property type="match status" value="1"/>
</dbReference>
<sequence length="126" mass="13782">VDVSGDAAAGEKAFRQCITCHVVVDDSGETLAGRNAKVGPNLYKVPGRHAGQIEGFRYSDSMSQAGQNGLVWVEEEFVKYVQDPTGYLREYLGDSKARGAMTHKVRKEDEAVDIYAYLASLGVHEE</sequence>
<name>CYC2_RHOAD</name>
<comment type="function">
    <text evidence="5">Cytochrome c2 is found mainly in purple, non-sulfur, photosynthetic bacteria where it functions as the electron donor to the oxidized bacteriochlorophyll in the photophosphorylation pathway. However, it may also have a role in the respiratory chain and is found in some non-photosynthetic bacteria.</text>
</comment>
<comment type="subcellular location">
    <subcellularLocation>
        <location evidence="4">Periplasm</location>
    </subcellularLocation>
</comment>
<comment type="PTM">
    <text evidence="1">Binds 1 heme c group covalently per subunit.</text>
</comment>
<comment type="similarity">
    <text evidence="2">Belongs to the cytochrome c family.</text>
</comment>
<reference key="1">
    <citation type="journal article" date="2010" name="Arch. Microbiol.">
        <title>Evidence from the structure and function of cytochromes c(2) that nonsulfur purple bacterial photosynthesis followed the evolution of oxygen respiration.</title>
        <authorList>
            <person name="Meyer T."/>
            <person name="Van Driessche G."/>
            <person name="Ambler R."/>
            <person name="Kyndt J."/>
            <person name="Devreese B."/>
            <person name="Van Beeumen J."/>
            <person name="Cusanovich M."/>
        </authorList>
    </citation>
    <scope>PROTEIN SEQUENCE</scope>
    <scope>SUBCELLULAR LOCATION</scope>
</reference>
<proteinExistence type="evidence at protein level"/>
<evidence type="ECO:0000250" key="1">
    <source>
        <dbReference type="UniProtKB" id="P0C0X8"/>
    </source>
</evidence>
<evidence type="ECO:0000255" key="2"/>
<evidence type="ECO:0000255" key="3">
    <source>
        <dbReference type="PROSITE-ProRule" id="PRU00433"/>
    </source>
</evidence>
<evidence type="ECO:0000269" key="4">
    <source>
    </source>
</evidence>
<evidence type="ECO:0000305" key="5"/>
<feature type="chain" id="PRO_0000108353" description="Cytochrome c2">
    <location>
        <begin position="1"/>
        <end position="126"/>
    </location>
</feature>
<feature type="binding site" description="covalent" evidence="1 3">
    <location>
        <position position="17"/>
    </location>
    <ligand>
        <name>heme c</name>
        <dbReference type="ChEBI" id="CHEBI:61717"/>
    </ligand>
</feature>
<feature type="binding site" description="covalent" evidence="1 3">
    <location>
        <position position="20"/>
    </location>
    <ligand>
        <name>heme c</name>
        <dbReference type="ChEBI" id="CHEBI:61717"/>
    </ligand>
</feature>
<feature type="binding site" description="axial binding residue" evidence="1 3">
    <location>
        <position position="21"/>
    </location>
    <ligand>
        <name>heme c</name>
        <dbReference type="ChEBI" id="CHEBI:61717"/>
    </ligand>
    <ligandPart>
        <name>Fe</name>
        <dbReference type="ChEBI" id="CHEBI:18248"/>
    </ligandPart>
</feature>
<feature type="binding site" description="axial binding residue" evidence="1 3">
    <location>
        <position position="101"/>
    </location>
    <ligand>
        <name>heme c</name>
        <dbReference type="ChEBI" id="CHEBI:61717"/>
    </ligand>
    <ligandPart>
        <name>Fe</name>
        <dbReference type="ChEBI" id="CHEBI:18248"/>
    </ligandPart>
</feature>